<name>RF3_SALSV</name>
<gene>
    <name evidence="1" type="primary">prfC</name>
    <name type="ordered locus">SeSA_A4813</name>
</gene>
<dbReference type="EMBL" id="CP001127">
    <property type="protein sequence ID" value="ACF89057.1"/>
    <property type="molecule type" value="Genomic_DNA"/>
</dbReference>
<dbReference type="RefSeq" id="WP_000175965.1">
    <property type="nucleotide sequence ID" value="NC_011094.1"/>
</dbReference>
<dbReference type="SMR" id="B4TU33"/>
<dbReference type="KEGG" id="sew:SeSA_A4813"/>
<dbReference type="HOGENOM" id="CLU_002794_2_1_6"/>
<dbReference type="Proteomes" id="UP000001865">
    <property type="component" value="Chromosome"/>
</dbReference>
<dbReference type="GO" id="GO:0005829">
    <property type="term" value="C:cytosol"/>
    <property type="evidence" value="ECO:0007669"/>
    <property type="project" value="TreeGrafter"/>
</dbReference>
<dbReference type="GO" id="GO:0005525">
    <property type="term" value="F:GTP binding"/>
    <property type="evidence" value="ECO:0007669"/>
    <property type="project" value="UniProtKB-UniRule"/>
</dbReference>
<dbReference type="GO" id="GO:0003924">
    <property type="term" value="F:GTPase activity"/>
    <property type="evidence" value="ECO:0007669"/>
    <property type="project" value="InterPro"/>
</dbReference>
<dbReference type="GO" id="GO:0097216">
    <property type="term" value="F:guanosine tetraphosphate binding"/>
    <property type="evidence" value="ECO:0007669"/>
    <property type="project" value="UniProtKB-ARBA"/>
</dbReference>
<dbReference type="GO" id="GO:0016150">
    <property type="term" value="F:translation release factor activity, codon nonspecific"/>
    <property type="evidence" value="ECO:0007669"/>
    <property type="project" value="TreeGrafter"/>
</dbReference>
<dbReference type="GO" id="GO:0016149">
    <property type="term" value="F:translation release factor activity, codon specific"/>
    <property type="evidence" value="ECO:0007669"/>
    <property type="project" value="UniProtKB-UniRule"/>
</dbReference>
<dbReference type="GO" id="GO:0006449">
    <property type="term" value="P:regulation of translational termination"/>
    <property type="evidence" value="ECO:0007669"/>
    <property type="project" value="UniProtKB-UniRule"/>
</dbReference>
<dbReference type="CDD" id="cd04169">
    <property type="entry name" value="RF3"/>
    <property type="match status" value="1"/>
</dbReference>
<dbReference type="CDD" id="cd03689">
    <property type="entry name" value="RF3_II"/>
    <property type="match status" value="1"/>
</dbReference>
<dbReference type="CDD" id="cd16259">
    <property type="entry name" value="RF3_III"/>
    <property type="match status" value="1"/>
</dbReference>
<dbReference type="FunFam" id="2.40.30.10:FF:000040">
    <property type="entry name" value="Peptide chain release factor 3"/>
    <property type="match status" value="1"/>
</dbReference>
<dbReference type="FunFam" id="3.30.70.3280:FF:000001">
    <property type="entry name" value="Peptide chain release factor 3"/>
    <property type="match status" value="1"/>
</dbReference>
<dbReference type="FunFam" id="3.40.50.300:FF:000184">
    <property type="entry name" value="Peptide chain release factor 3"/>
    <property type="match status" value="1"/>
</dbReference>
<dbReference type="FunFam" id="3.40.50.300:FF:000253">
    <property type="entry name" value="Peptide chain release factor 3"/>
    <property type="match status" value="1"/>
</dbReference>
<dbReference type="Gene3D" id="3.40.50.300">
    <property type="entry name" value="P-loop containing nucleotide triphosphate hydrolases"/>
    <property type="match status" value="3"/>
</dbReference>
<dbReference type="Gene3D" id="3.30.70.3280">
    <property type="entry name" value="Peptide chain release factor 3, domain III"/>
    <property type="match status" value="1"/>
</dbReference>
<dbReference type="HAMAP" id="MF_00072">
    <property type="entry name" value="Rel_fac_3"/>
    <property type="match status" value="1"/>
</dbReference>
<dbReference type="InterPro" id="IPR053905">
    <property type="entry name" value="EF-G-like_DII"/>
</dbReference>
<dbReference type="InterPro" id="IPR035647">
    <property type="entry name" value="EFG_III/V"/>
</dbReference>
<dbReference type="InterPro" id="IPR031157">
    <property type="entry name" value="G_TR_CS"/>
</dbReference>
<dbReference type="InterPro" id="IPR027417">
    <property type="entry name" value="P-loop_NTPase"/>
</dbReference>
<dbReference type="InterPro" id="IPR004548">
    <property type="entry name" value="PrfC"/>
</dbReference>
<dbReference type="InterPro" id="IPR032090">
    <property type="entry name" value="RF3_C"/>
</dbReference>
<dbReference type="InterPro" id="IPR038467">
    <property type="entry name" value="RF3_dom_3_sf"/>
</dbReference>
<dbReference type="InterPro" id="IPR041732">
    <property type="entry name" value="RF3_GTP-bd"/>
</dbReference>
<dbReference type="InterPro" id="IPR005225">
    <property type="entry name" value="Small_GTP-bd"/>
</dbReference>
<dbReference type="InterPro" id="IPR000795">
    <property type="entry name" value="T_Tr_GTP-bd_dom"/>
</dbReference>
<dbReference type="InterPro" id="IPR009000">
    <property type="entry name" value="Transl_B-barrel_sf"/>
</dbReference>
<dbReference type="NCBIfam" id="TIGR00503">
    <property type="entry name" value="prfC"/>
    <property type="match status" value="1"/>
</dbReference>
<dbReference type="NCBIfam" id="NF001964">
    <property type="entry name" value="PRK00741.1"/>
    <property type="match status" value="1"/>
</dbReference>
<dbReference type="NCBIfam" id="TIGR00231">
    <property type="entry name" value="small_GTP"/>
    <property type="match status" value="1"/>
</dbReference>
<dbReference type="PANTHER" id="PTHR43556">
    <property type="entry name" value="PEPTIDE CHAIN RELEASE FACTOR RF3"/>
    <property type="match status" value="1"/>
</dbReference>
<dbReference type="PANTHER" id="PTHR43556:SF2">
    <property type="entry name" value="PEPTIDE CHAIN RELEASE FACTOR RF3"/>
    <property type="match status" value="1"/>
</dbReference>
<dbReference type="Pfam" id="PF22042">
    <property type="entry name" value="EF-G_D2"/>
    <property type="match status" value="1"/>
</dbReference>
<dbReference type="Pfam" id="PF00009">
    <property type="entry name" value="GTP_EFTU"/>
    <property type="match status" value="1"/>
</dbReference>
<dbReference type="Pfam" id="PF16658">
    <property type="entry name" value="RF3_C"/>
    <property type="match status" value="1"/>
</dbReference>
<dbReference type="PRINTS" id="PR00315">
    <property type="entry name" value="ELONGATNFCT"/>
</dbReference>
<dbReference type="SUPFAM" id="SSF54980">
    <property type="entry name" value="EF-G C-terminal domain-like"/>
    <property type="match status" value="1"/>
</dbReference>
<dbReference type="SUPFAM" id="SSF52540">
    <property type="entry name" value="P-loop containing nucleoside triphosphate hydrolases"/>
    <property type="match status" value="1"/>
</dbReference>
<dbReference type="SUPFAM" id="SSF50447">
    <property type="entry name" value="Translation proteins"/>
    <property type="match status" value="1"/>
</dbReference>
<dbReference type="PROSITE" id="PS00301">
    <property type="entry name" value="G_TR_1"/>
    <property type="match status" value="1"/>
</dbReference>
<dbReference type="PROSITE" id="PS51722">
    <property type="entry name" value="G_TR_2"/>
    <property type="match status" value="1"/>
</dbReference>
<reference key="1">
    <citation type="journal article" date="2011" name="J. Bacteriol.">
        <title>Comparative genomics of 28 Salmonella enterica isolates: evidence for CRISPR-mediated adaptive sublineage evolution.</title>
        <authorList>
            <person name="Fricke W.F."/>
            <person name="Mammel M.K."/>
            <person name="McDermott P.F."/>
            <person name="Tartera C."/>
            <person name="White D.G."/>
            <person name="Leclerc J.E."/>
            <person name="Ravel J."/>
            <person name="Cebula T.A."/>
        </authorList>
    </citation>
    <scope>NUCLEOTIDE SEQUENCE [LARGE SCALE GENOMIC DNA]</scope>
    <source>
        <strain>CVM19633</strain>
    </source>
</reference>
<comment type="function">
    <text evidence="1">Increases the formation of ribosomal termination complexes and stimulates activities of RF-1 and RF-2. It binds guanine nucleotides and has strong preference for UGA stop codons. It may interact directly with the ribosome. The stimulation of RF-1 and RF-2 is significantly reduced by GTP and GDP, but not by GMP.</text>
</comment>
<comment type="subcellular location">
    <subcellularLocation>
        <location evidence="1">Cytoplasm</location>
    </subcellularLocation>
</comment>
<comment type="similarity">
    <text evidence="1">Belongs to the TRAFAC class translation factor GTPase superfamily. Classic translation factor GTPase family. PrfC subfamily.</text>
</comment>
<proteinExistence type="inferred from homology"/>
<accession>B4TU33</accession>
<protein>
    <recommendedName>
        <fullName evidence="1">Peptide chain release factor 3</fullName>
        <shortName evidence="1">RF-3</shortName>
    </recommendedName>
</protein>
<organism>
    <name type="scientific">Salmonella schwarzengrund (strain CVM19633)</name>
    <dbReference type="NCBI Taxonomy" id="439843"/>
    <lineage>
        <taxon>Bacteria</taxon>
        <taxon>Pseudomonadati</taxon>
        <taxon>Pseudomonadota</taxon>
        <taxon>Gammaproteobacteria</taxon>
        <taxon>Enterobacterales</taxon>
        <taxon>Enterobacteriaceae</taxon>
        <taxon>Salmonella</taxon>
    </lineage>
</organism>
<sequence length="529" mass="59563">MTLSPYLQEVAKRRTFAIISHPDAGKTTITEKVLLFGQAIQTAGTVKGRGSSQHAKSDWMEMEKQRGISITTSVMQFPYHDCLVNLLDTPGHEDFSEDTYRTLTAVDCCLMVIDAAKGVEDRTRKLMEVTRLRDTPILTFMNKLDRDIRDPMELLDEVENELKIGCAPITWPIGCGKLFKGVYHLYKDETYLYQTGKGHTIQEVRIVKGLNNPDLDAAVGEDLAQQLRDELELVQGASNEFDEELFLAGEITPVFFGTALGNFGVDHMLDGLVAWAPAPMPRQTDTRTVEASEEKFTGFVFKIQANMDPKHRDRVAFMRVVSGKYEKGMKLRQVRTGKDVVISDALTFMAGDRSHVEEAYPGDILGLHNHGTIQIGDTFTQGEMMKFTGIPNFAPELFRRIRLKDPLKQKQLLKGLVQLSEEGAVQVFRPISNNDLIVGAVGVLQFDVVVARLKSEYNVEAIYESVNVATARWVESADAKKFEEFKRKNETQLALDGGDNLTYIAPTMVNLNLTQERYPDVQFRKTREH</sequence>
<feature type="chain" id="PRO_1000092500" description="Peptide chain release factor 3">
    <location>
        <begin position="1"/>
        <end position="529"/>
    </location>
</feature>
<feature type="domain" description="tr-type G">
    <location>
        <begin position="11"/>
        <end position="280"/>
    </location>
</feature>
<feature type="binding site" evidence="1">
    <location>
        <begin position="20"/>
        <end position="27"/>
    </location>
    <ligand>
        <name>GTP</name>
        <dbReference type="ChEBI" id="CHEBI:37565"/>
    </ligand>
</feature>
<feature type="binding site" evidence="1">
    <location>
        <begin position="88"/>
        <end position="92"/>
    </location>
    <ligand>
        <name>GTP</name>
        <dbReference type="ChEBI" id="CHEBI:37565"/>
    </ligand>
</feature>
<feature type="binding site" evidence="1">
    <location>
        <begin position="142"/>
        <end position="145"/>
    </location>
    <ligand>
        <name>GTP</name>
        <dbReference type="ChEBI" id="CHEBI:37565"/>
    </ligand>
</feature>
<keyword id="KW-0963">Cytoplasm</keyword>
<keyword id="KW-0342">GTP-binding</keyword>
<keyword id="KW-0547">Nucleotide-binding</keyword>
<keyword id="KW-0648">Protein biosynthesis</keyword>
<evidence type="ECO:0000255" key="1">
    <source>
        <dbReference type="HAMAP-Rule" id="MF_00072"/>
    </source>
</evidence>